<evidence type="ECO:0000255" key="1">
    <source>
        <dbReference type="HAMAP-Rule" id="MF_00736"/>
    </source>
</evidence>
<evidence type="ECO:0000305" key="2"/>
<gene>
    <name evidence="1" type="primary">rplK</name>
    <name type="ordered locus">CMS2624</name>
</gene>
<keyword id="KW-0488">Methylation</keyword>
<keyword id="KW-0687">Ribonucleoprotein</keyword>
<keyword id="KW-0689">Ribosomal protein</keyword>
<keyword id="KW-0694">RNA-binding</keyword>
<keyword id="KW-0699">rRNA-binding</keyword>
<proteinExistence type="inferred from homology"/>
<organism>
    <name type="scientific">Clavibacter sepedonicus</name>
    <name type="common">Clavibacter michiganensis subsp. sepedonicus</name>
    <dbReference type="NCBI Taxonomy" id="31964"/>
    <lineage>
        <taxon>Bacteria</taxon>
        <taxon>Bacillati</taxon>
        <taxon>Actinomycetota</taxon>
        <taxon>Actinomycetes</taxon>
        <taxon>Micrococcales</taxon>
        <taxon>Microbacteriaceae</taxon>
        <taxon>Clavibacter</taxon>
    </lineage>
</organism>
<protein>
    <recommendedName>
        <fullName evidence="1">Large ribosomal subunit protein uL11</fullName>
    </recommendedName>
    <alternativeName>
        <fullName evidence="2">50S ribosomal protein L11</fullName>
    </alternativeName>
</protein>
<reference key="1">
    <citation type="journal article" date="2008" name="J. Bacteriol.">
        <title>Genome of the actinomycete plant pathogen Clavibacter michiganensis subsp. sepedonicus suggests recent niche adaptation.</title>
        <authorList>
            <person name="Bentley S.D."/>
            <person name="Corton C."/>
            <person name="Brown S.E."/>
            <person name="Barron A."/>
            <person name="Clark L."/>
            <person name="Doggett J."/>
            <person name="Harris B."/>
            <person name="Ormond D."/>
            <person name="Quail M.A."/>
            <person name="May G."/>
            <person name="Francis D."/>
            <person name="Knudson D."/>
            <person name="Parkhill J."/>
            <person name="Ishimaru C.A."/>
        </authorList>
    </citation>
    <scope>NUCLEOTIDE SEQUENCE [LARGE SCALE GENOMIC DNA]</scope>
    <source>
        <strain>ATCC 33113 / DSM 20744 / JCM 9667 / LMG 2889 / ICMP 2535 / C-1</strain>
    </source>
</reference>
<comment type="function">
    <text evidence="1">Forms part of the ribosomal stalk which helps the ribosome interact with GTP-bound translation factors.</text>
</comment>
<comment type="subunit">
    <text evidence="1">Part of the ribosomal stalk of the 50S ribosomal subunit. Interacts with L10 and the large rRNA to form the base of the stalk. L10 forms an elongated spine to which L12 dimers bind in a sequential fashion forming a multimeric L10(L12)X complex.</text>
</comment>
<comment type="PTM">
    <text evidence="1">One or more lysine residues are methylated.</text>
</comment>
<comment type="similarity">
    <text evidence="1">Belongs to the universal ribosomal protein uL11 family.</text>
</comment>
<feature type="chain" id="PRO_1000083373" description="Large ribosomal subunit protein uL11">
    <location>
        <begin position="1"/>
        <end position="143"/>
    </location>
</feature>
<name>RL11_CLASE</name>
<dbReference type="EMBL" id="AM849034">
    <property type="protein sequence ID" value="CAQ02700.1"/>
    <property type="molecule type" value="Genomic_DNA"/>
</dbReference>
<dbReference type="RefSeq" id="WP_012299878.1">
    <property type="nucleotide sequence ID" value="NZ_MZMN01000003.1"/>
</dbReference>
<dbReference type="SMR" id="B0RIR7"/>
<dbReference type="STRING" id="31964.CMS2624"/>
<dbReference type="KEGG" id="cms:CMS2624"/>
<dbReference type="eggNOG" id="COG0080">
    <property type="taxonomic scope" value="Bacteria"/>
</dbReference>
<dbReference type="HOGENOM" id="CLU_074237_2_1_11"/>
<dbReference type="OrthoDB" id="9802408at2"/>
<dbReference type="Proteomes" id="UP000001318">
    <property type="component" value="Chromosome"/>
</dbReference>
<dbReference type="GO" id="GO:0022625">
    <property type="term" value="C:cytosolic large ribosomal subunit"/>
    <property type="evidence" value="ECO:0007669"/>
    <property type="project" value="TreeGrafter"/>
</dbReference>
<dbReference type="GO" id="GO:0070180">
    <property type="term" value="F:large ribosomal subunit rRNA binding"/>
    <property type="evidence" value="ECO:0007669"/>
    <property type="project" value="UniProtKB-UniRule"/>
</dbReference>
<dbReference type="GO" id="GO:0003735">
    <property type="term" value="F:structural constituent of ribosome"/>
    <property type="evidence" value="ECO:0007669"/>
    <property type="project" value="InterPro"/>
</dbReference>
<dbReference type="GO" id="GO:0006412">
    <property type="term" value="P:translation"/>
    <property type="evidence" value="ECO:0007669"/>
    <property type="project" value="UniProtKB-UniRule"/>
</dbReference>
<dbReference type="CDD" id="cd00349">
    <property type="entry name" value="Ribosomal_L11"/>
    <property type="match status" value="1"/>
</dbReference>
<dbReference type="FunFam" id="1.10.10.250:FF:000001">
    <property type="entry name" value="50S ribosomal protein L11"/>
    <property type="match status" value="1"/>
</dbReference>
<dbReference type="FunFam" id="3.30.1550.10:FF:000001">
    <property type="entry name" value="50S ribosomal protein L11"/>
    <property type="match status" value="1"/>
</dbReference>
<dbReference type="Gene3D" id="1.10.10.250">
    <property type="entry name" value="Ribosomal protein L11, C-terminal domain"/>
    <property type="match status" value="1"/>
</dbReference>
<dbReference type="Gene3D" id="3.30.1550.10">
    <property type="entry name" value="Ribosomal protein L11/L12, N-terminal domain"/>
    <property type="match status" value="1"/>
</dbReference>
<dbReference type="HAMAP" id="MF_00736">
    <property type="entry name" value="Ribosomal_uL11"/>
    <property type="match status" value="1"/>
</dbReference>
<dbReference type="InterPro" id="IPR000911">
    <property type="entry name" value="Ribosomal_uL11"/>
</dbReference>
<dbReference type="InterPro" id="IPR006519">
    <property type="entry name" value="Ribosomal_uL11_bac-typ"/>
</dbReference>
<dbReference type="InterPro" id="IPR020783">
    <property type="entry name" value="Ribosomal_uL11_C"/>
</dbReference>
<dbReference type="InterPro" id="IPR036769">
    <property type="entry name" value="Ribosomal_uL11_C_sf"/>
</dbReference>
<dbReference type="InterPro" id="IPR020785">
    <property type="entry name" value="Ribosomal_uL11_CS"/>
</dbReference>
<dbReference type="InterPro" id="IPR020784">
    <property type="entry name" value="Ribosomal_uL11_N"/>
</dbReference>
<dbReference type="InterPro" id="IPR036796">
    <property type="entry name" value="Ribosomal_uL11_N_sf"/>
</dbReference>
<dbReference type="NCBIfam" id="TIGR01632">
    <property type="entry name" value="L11_bact"/>
    <property type="match status" value="1"/>
</dbReference>
<dbReference type="PANTHER" id="PTHR11661">
    <property type="entry name" value="60S RIBOSOMAL PROTEIN L12"/>
    <property type="match status" value="1"/>
</dbReference>
<dbReference type="PANTHER" id="PTHR11661:SF1">
    <property type="entry name" value="LARGE RIBOSOMAL SUBUNIT PROTEIN UL11M"/>
    <property type="match status" value="1"/>
</dbReference>
<dbReference type="Pfam" id="PF00298">
    <property type="entry name" value="Ribosomal_L11"/>
    <property type="match status" value="1"/>
</dbReference>
<dbReference type="Pfam" id="PF03946">
    <property type="entry name" value="Ribosomal_L11_N"/>
    <property type="match status" value="1"/>
</dbReference>
<dbReference type="SMART" id="SM00649">
    <property type="entry name" value="RL11"/>
    <property type="match status" value="1"/>
</dbReference>
<dbReference type="SUPFAM" id="SSF54747">
    <property type="entry name" value="Ribosomal L11/L12e N-terminal domain"/>
    <property type="match status" value="1"/>
</dbReference>
<dbReference type="SUPFAM" id="SSF46906">
    <property type="entry name" value="Ribosomal protein L11, C-terminal domain"/>
    <property type="match status" value="1"/>
</dbReference>
<dbReference type="PROSITE" id="PS00359">
    <property type="entry name" value="RIBOSOMAL_L11"/>
    <property type="match status" value="1"/>
</dbReference>
<accession>B0RIR7</accession>
<sequence length="143" mass="15062">MAPKKKVTGLIKLQIKAGAANPAPPIGPALGQHGVNIMEFCKAYNAQTESQRGNVIPVEITVYEDRTFTFILKTPPAAELIKKAAGVAKGSGTPHTVKVAKLTMDQVREIAEQKQADLNANDIDAAAKIIAGTARSMGITVEA</sequence>